<feature type="chain" id="PRO_0000244749" description="Large ribosomal subunit protein eL31z">
    <location>
        <begin position="1"/>
        <end position="119"/>
    </location>
</feature>
<proteinExistence type="inferred from homology"/>
<name>RL311_ARATH</name>
<dbReference type="EMBL" id="AC005169">
    <property type="protein sequence ID" value="AAC62142.1"/>
    <property type="molecule type" value="Genomic_DNA"/>
</dbReference>
<dbReference type="EMBL" id="CP002685">
    <property type="protein sequence ID" value="AEC06921.1"/>
    <property type="molecule type" value="Genomic_DNA"/>
</dbReference>
<dbReference type="EMBL" id="AY052313">
    <property type="protein sequence ID" value="AAK96506.1"/>
    <property type="molecule type" value="mRNA"/>
</dbReference>
<dbReference type="EMBL" id="AY054616">
    <property type="protein sequence ID" value="AAK96807.1"/>
    <property type="molecule type" value="mRNA"/>
</dbReference>
<dbReference type="EMBL" id="AY061893">
    <property type="protein sequence ID" value="AAL31220.1"/>
    <property type="molecule type" value="mRNA"/>
</dbReference>
<dbReference type="EMBL" id="AY072459">
    <property type="protein sequence ID" value="AAL66874.1"/>
    <property type="molecule type" value="mRNA"/>
</dbReference>
<dbReference type="PIR" id="E84580">
    <property type="entry name" value="E84580"/>
</dbReference>
<dbReference type="RefSeq" id="NP_179564.1">
    <property type="nucleotide sequence ID" value="NM_127532.4"/>
</dbReference>
<dbReference type="SMR" id="Q9SLL7"/>
<dbReference type="BioGRID" id="1848">
    <property type="interactions" value="83"/>
</dbReference>
<dbReference type="FunCoup" id="Q9SLL7">
    <property type="interactions" value="3122"/>
</dbReference>
<dbReference type="STRING" id="3702.Q9SLL7"/>
<dbReference type="PaxDb" id="3702-AT2G19740.1"/>
<dbReference type="ProteomicsDB" id="224814"/>
<dbReference type="EnsemblPlants" id="AT2G19740.1">
    <property type="protein sequence ID" value="AT2G19740.1"/>
    <property type="gene ID" value="AT2G19740"/>
</dbReference>
<dbReference type="GeneID" id="816493"/>
<dbReference type="Gramene" id="AT2G19740.1">
    <property type="protein sequence ID" value="AT2G19740.1"/>
    <property type="gene ID" value="AT2G19740"/>
</dbReference>
<dbReference type="KEGG" id="ath:AT2G19740"/>
<dbReference type="Araport" id="AT2G19740"/>
<dbReference type="TAIR" id="AT2G19740"/>
<dbReference type="eggNOG" id="KOG0893">
    <property type="taxonomic scope" value="Eukaryota"/>
</dbReference>
<dbReference type="HOGENOM" id="CLU_112570_1_2_1"/>
<dbReference type="InParanoid" id="Q9SLL7"/>
<dbReference type="OMA" id="DINMRTF"/>
<dbReference type="OrthoDB" id="1091999at2759"/>
<dbReference type="PhylomeDB" id="Q9SLL7"/>
<dbReference type="PRO" id="PR:Q9SLL7"/>
<dbReference type="Proteomes" id="UP000006548">
    <property type="component" value="Chromosome 2"/>
</dbReference>
<dbReference type="ExpressionAtlas" id="Q9SLL7">
    <property type="expression patterns" value="baseline and differential"/>
</dbReference>
<dbReference type="GO" id="GO:0009507">
    <property type="term" value="C:chloroplast"/>
    <property type="evidence" value="ECO:0007005"/>
    <property type="project" value="TAIR"/>
</dbReference>
<dbReference type="GO" id="GO:0022625">
    <property type="term" value="C:cytosolic large ribosomal subunit"/>
    <property type="evidence" value="ECO:0007005"/>
    <property type="project" value="TAIR"/>
</dbReference>
<dbReference type="GO" id="GO:0022626">
    <property type="term" value="C:cytosolic ribosome"/>
    <property type="evidence" value="ECO:0007005"/>
    <property type="project" value="TAIR"/>
</dbReference>
<dbReference type="GO" id="GO:0003729">
    <property type="term" value="F:mRNA binding"/>
    <property type="evidence" value="ECO:0000314"/>
    <property type="project" value="TAIR"/>
</dbReference>
<dbReference type="GO" id="GO:0003735">
    <property type="term" value="F:structural constituent of ribosome"/>
    <property type="evidence" value="ECO:0000314"/>
    <property type="project" value="CAFA"/>
</dbReference>
<dbReference type="GO" id="GO:0006412">
    <property type="term" value="P:translation"/>
    <property type="evidence" value="ECO:0007669"/>
    <property type="project" value="InterPro"/>
</dbReference>
<dbReference type="CDD" id="cd00463">
    <property type="entry name" value="Ribosomal_L31e"/>
    <property type="match status" value="1"/>
</dbReference>
<dbReference type="FunFam" id="3.10.440.10:FF:000001">
    <property type="entry name" value="60S ribosomal protein L31"/>
    <property type="match status" value="1"/>
</dbReference>
<dbReference type="Gene3D" id="3.10.440.10">
    <property type="match status" value="1"/>
</dbReference>
<dbReference type="InterPro" id="IPR000054">
    <property type="entry name" value="Ribosomal_eL31"/>
</dbReference>
<dbReference type="InterPro" id="IPR020052">
    <property type="entry name" value="Ribosomal_eL31_CS"/>
</dbReference>
<dbReference type="InterPro" id="IPR023621">
    <property type="entry name" value="Ribosomal_eL31_dom_sf"/>
</dbReference>
<dbReference type="NCBIfam" id="NF002258">
    <property type="entry name" value="PRK01192.1-1"/>
    <property type="match status" value="1"/>
</dbReference>
<dbReference type="PANTHER" id="PTHR10956">
    <property type="entry name" value="60S RIBOSOMAL PROTEIN L31"/>
    <property type="match status" value="1"/>
</dbReference>
<dbReference type="PANTHER" id="PTHR10956:SF34">
    <property type="entry name" value="LARGE RIBOSOMAL SUBUNIT PROTEIN EL31Z"/>
    <property type="match status" value="1"/>
</dbReference>
<dbReference type="Pfam" id="PF01198">
    <property type="entry name" value="Ribosomal_L31e"/>
    <property type="match status" value="1"/>
</dbReference>
<dbReference type="SMART" id="SM01380">
    <property type="entry name" value="Ribosomal_L31e"/>
    <property type="match status" value="1"/>
</dbReference>
<dbReference type="SUPFAM" id="SSF54575">
    <property type="entry name" value="Ribosomal protein L31e"/>
    <property type="match status" value="1"/>
</dbReference>
<dbReference type="PROSITE" id="PS01144">
    <property type="entry name" value="RIBOSOMAL_L31E"/>
    <property type="match status" value="1"/>
</dbReference>
<sequence>MEKGKGRKEEVVTREYTINLHRRLHSCTFKKKAPNAIKEIRKFALKAMGTKDVRVDVKLNKQIWSKGIRGPPRRIRVRVARKRNDDEDAKEEFFSLVTVAEIPAEGLSGLGTKVIEEEE</sequence>
<accession>Q9SLL7</accession>
<comment type="similarity">
    <text evidence="2">Belongs to the eukaryotic ribosomal protein eL31 family.</text>
</comment>
<protein>
    <recommendedName>
        <fullName evidence="1">Large ribosomal subunit protein eL31z</fullName>
    </recommendedName>
    <alternativeName>
        <fullName>60S ribosomal protein L31-1</fullName>
    </alternativeName>
</protein>
<gene>
    <name type="primary">RPL31A</name>
    <name type="ordered locus">At2g19740</name>
    <name type="ORF">F6F22.23</name>
</gene>
<evidence type="ECO:0000303" key="1">
    <source>
    </source>
</evidence>
<evidence type="ECO:0000305" key="2"/>
<keyword id="KW-1185">Reference proteome</keyword>
<keyword id="KW-0687">Ribonucleoprotein</keyword>
<keyword id="KW-0689">Ribosomal protein</keyword>
<organism>
    <name type="scientific">Arabidopsis thaliana</name>
    <name type="common">Mouse-ear cress</name>
    <dbReference type="NCBI Taxonomy" id="3702"/>
    <lineage>
        <taxon>Eukaryota</taxon>
        <taxon>Viridiplantae</taxon>
        <taxon>Streptophyta</taxon>
        <taxon>Embryophyta</taxon>
        <taxon>Tracheophyta</taxon>
        <taxon>Spermatophyta</taxon>
        <taxon>Magnoliopsida</taxon>
        <taxon>eudicotyledons</taxon>
        <taxon>Gunneridae</taxon>
        <taxon>Pentapetalae</taxon>
        <taxon>rosids</taxon>
        <taxon>malvids</taxon>
        <taxon>Brassicales</taxon>
        <taxon>Brassicaceae</taxon>
        <taxon>Camelineae</taxon>
        <taxon>Arabidopsis</taxon>
    </lineage>
</organism>
<reference key="1">
    <citation type="journal article" date="1999" name="Nature">
        <title>Sequence and analysis of chromosome 2 of the plant Arabidopsis thaliana.</title>
        <authorList>
            <person name="Lin X."/>
            <person name="Kaul S."/>
            <person name="Rounsley S.D."/>
            <person name="Shea T.P."/>
            <person name="Benito M.-I."/>
            <person name="Town C.D."/>
            <person name="Fujii C.Y."/>
            <person name="Mason T.M."/>
            <person name="Bowman C.L."/>
            <person name="Barnstead M.E."/>
            <person name="Feldblyum T.V."/>
            <person name="Buell C.R."/>
            <person name="Ketchum K.A."/>
            <person name="Lee J.J."/>
            <person name="Ronning C.M."/>
            <person name="Koo H.L."/>
            <person name="Moffat K.S."/>
            <person name="Cronin L.A."/>
            <person name="Shen M."/>
            <person name="Pai G."/>
            <person name="Van Aken S."/>
            <person name="Umayam L."/>
            <person name="Tallon L.J."/>
            <person name="Gill J.E."/>
            <person name="Adams M.D."/>
            <person name="Carrera A.J."/>
            <person name="Creasy T.H."/>
            <person name="Goodman H.M."/>
            <person name="Somerville C.R."/>
            <person name="Copenhaver G.P."/>
            <person name="Preuss D."/>
            <person name="Nierman W.C."/>
            <person name="White O."/>
            <person name="Eisen J.A."/>
            <person name="Salzberg S.L."/>
            <person name="Fraser C.M."/>
            <person name="Venter J.C."/>
        </authorList>
    </citation>
    <scope>NUCLEOTIDE SEQUENCE [LARGE SCALE GENOMIC DNA]</scope>
    <source>
        <strain>cv. Columbia</strain>
    </source>
</reference>
<reference key="2">
    <citation type="journal article" date="2017" name="Plant J.">
        <title>Araport11: a complete reannotation of the Arabidopsis thaliana reference genome.</title>
        <authorList>
            <person name="Cheng C.Y."/>
            <person name="Krishnakumar V."/>
            <person name="Chan A.P."/>
            <person name="Thibaud-Nissen F."/>
            <person name="Schobel S."/>
            <person name="Town C.D."/>
        </authorList>
    </citation>
    <scope>GENOME REANNOTATION</scope>
    <source>
        <strain>cv. Columbia</strain>
    </source>
</reference>
<reference key="3">
    <citation type="journal article" date="2003" name="Science">
        <title>Empirical analysis of transcriptional activity in the Arabidopsis genome.</title>
        <authorList>
            <person name="Yamada K."/>
            <person name="Lim J."/>
            <person name="Dale J.M."/>
            <person name="Chen H."/>
            <person name="Shinn P."/>
            <person name="Palm C.J."/>
            <person name="Southwick A.M."/>
            <person name="Wu H.C."/>
            <person name="Kim C.J."/>
            <person name="Nguyen M."/>
            <person name="Pham P.K."/>
            <person name="Cheuk R.F."/>
            <person name="Karlin-Newmann G."/>
            <person name="Liu S.X."/>
            <person name="Lam B."/>
            <person name="Sakano H."/>
            <person name="Wu T."/>
            <person name="Yu G."/>
            <person name="Miranda M."/>
            <person name="Quach H.L."/>
            <person name="Tripp M."/>
            <person name="Chang C.H."/>
            <person name="Lee J.M."/>
            <person name="Toriumi M.J."/>
            <person name="Chan M.M."/>
            <person name="Tang C.C."/>
            <person name="Onodera C.S."/>
            <person name="Deng J.M."/>
            <person name="Akiyama K."/>
            <person name="Ansari Y."/>
            <person name="Arakawa T."/>
            <person name="Banh J."/>
            <person name="Banno F."/>
            <person name="Bowser L."/>
            <person name="Brooks S.Y."/>
            <person name="Carninci P."/>
            <person name="Chao Q."/>
            <person name="Choy N."/>
            <person name="Enju A."/>
            <person name="Goldsmith A.D."/>
            <person name="Gurjal M."/>
            <person name="Hansen N.F."/>
            <person name="Hayashizaki Y."/>
            <person name="Johnson-Hopson C."/>
            <person name="Hsuan V.W."/>
            <person name="Iida K."/>
            <person name="Karnes M."/>
            <person name="Khan S."/>
            <person name="Koesema E."/>
            <person name="Ishida J."/>
            <person name="Jiang P.X."/>
            <person name="Jones T."/>
            <person name="Kawai J."/>
            <person name="Kamiya A."/>
            <person name="Meyers C."/>
            <person name="Nakajima M."/>
            <person name="Narusaka M."/>
            <person name="Seki M."/>
            <person name="Sakurai T."/>
            <person name="Satou M."/>
            <person name="Tamse R."/>
            <person name="Vaysberg M."/>
            <person name="Wallender E.K."/>
            <person name="Wong C."/>
            <person name="Yamamura Y."/>
            <person name="Yuan S."/>
            <person name="Shinozaki K."/>
            <person name="Davis R.W."/>
            <person name="Theologis A."/>
            <person name="Ecker J.R."/>
        </authorList>
    </citation>
    <scope>NUCLEOTIDE SEQUENCE [LARGE SCALE MRNA]</scope>
    <source>
        <strain>cv. Columbia</strain>
    </source>
</reference>
<reference key="4">
    <citation type="journal article" date="2001" name="Plant Physiol.">
        <title>The organization of cytoplasmic ribosomal protein genes in the Arabidopsis genome.</title>
        <authorList>
            <person name="Barakat A."/>
            <person name="Szick-Miranda K."/>
            <person name="Chang I.-F."/>
            <person name="Guyot R."/>
            <person name="Blanc G."/>
            <person name="Cooke R."/>
            <person name="Delseny M."/>
            <person name="Bailey-Serres J."/>
        </authorList>
    </citation>
    <scope>GENE FAMILY ORGANIZATION</scope>
    <scope>NOMENCLATURE</scope>
</reference>
<reference key="5">
    <citation type="journal article" date="2023" name="Plant Cell">
        <title>An updated nomenclature for plant ribosomal protein genes.</title>
        <authorList>
            <person name="Scarpin M.R."/>
            <person name="Busche M."/>
            <person name="Martinez R.E."/>
            <person name="Harper L.C."/>
            <person name="Reiser L."/>
            <person name="Szakonyi D."/>
            <person name="Merchante C."/>
            <person name="Lan T."/>
            <person name="Xiong W."/>
            <person name="Mo B."/>
            <person name="Tang G."/>
            <person name="Chen X."/>
            <person name="Bailey-Serres J."/>
            <person name="Browning K.S."/>
            <person name="Brunkard J.O."/>
        </authorList>
    </citation>
    <scope>NOMENCLATURE</scope>
</reference>